<protein>
    <recommendedName>
        <fullName evidence="1">UPF0340 protein SAK_0153</fullName>
    </recommendedName>
</protein>
<gene>
    <name type="ordered locus">SAK_0153</name>
</gene>
<sequence>MILDYNKLKQETKAIVVDIIERSALKKGQIFVLGLSSSEVSGGLIGKNSSSEIGEIIVEVILKELHSRGIYLAVQGCEHVNRALVVEAELAERQQLEVVNVVPNLHAGGSGQVAAFKLMTSPVEVEEIVAHAGIDIGDTSIGMHIKRVQVPLIPISRELGGAHVTALASRPKLIGGARAGYTSDPIRKF</sequence>
<name>Y153_STRA1</name>
<evidence type="ECO:0000255" key="1">
    <source>
        <dbReference type="HAMAP-Rule" id="MF_00800"/>
    </source>
</evidence>
<comment type="similarity">
    <text evidence="1">Belongs to the UPF0340 family.</text>
</comment>
<proteinExistence type="inferred from homology"/>
<feature type="chain" id="PRO_1000046982" description="UPF0340 protein SAK_0153">
    <location>
        <begin position="1"/>
        <end position="189"/>
    </location>
</feature>
<reference key="1">
    <citation type="journal article" date="2005" name="Proc. Natl. Acad. Sci. U.S.A.">
        <title>Genome analysis of multiple pathogenic isolates of Streptococcus agalactiae: implications for the microbial 'pan-genome'.</title>
        <authorList>
            <person name="Tettelin H."/>
            <person name="Masignani V."/>
            <person name="Cieslewicz M.J."/>
            <person name="Donati C."/>
            <person name="Medini D."/>
            <person name="Ward N.L."/>
            <person name="Angiuoli S.V."/>
            <person name="Crabtree J."/>
            <person name="Jones A.L."/>
            <person name="Durkin A.S."/>
            <person name="DeBoy R.T."/>
            <person name="Davidsen T.M."/>
            <person name="Mora M."/>
            <person name="Scarselli M."/>
            <person name="Margarit y Ros I."/>
            <person name="Peterson J.D."/>
            <person name="Hauser C.R."/>
            <person name="Sundaram J.P."/>
            <person name="Nelson W.C."/>
            <person name="Madupu R."/>
            <person name="Brinkac L.M."/>
            <person name="Dodson R.J."/>
            <person name="Rosovitz M.J."/>
            <person name="Sullivan S.A."/>
            <person name="Daugherty S.C."/>
            <person name="Haft D.H."/>
            <person name="Selengut J."/>
            <person name="Gwinn M.L."/>
            <person name="Zhou L."/>
            <person name="Zafar N."/>
            <person name="Khouri H."/>
            <person name="Radune D."/>
            <person name="Dimitrov G."/>
            <person name="Watkins K."/>
            <person name="O'Connor K.J."/>
            <person name="Smith S."/>
            <person name="Utterback T.R."/>
            <person name="White O."/>
            <person name="Rubens C.E."/>
            <person name="Grandi G."/>
            <person name="Madoff L.C."/>
            <person name="Kasper D.L."/>
            <person name="Telford J.L."/>
            <person name="Wessels M.R."/>
            <person name="Rappuoli R."/>
            <person name="Fraser C.M."/>
        </authorList>
    </citation>
    <scope>NUCLEOTIDE SEQUENCE [LARGE SCALE GENOMIC DNA]</scope>
    <source>
        <strain>ATCC 27591 / A909 / CDC SS700</strain>
    </source>
</reference>
<accession>Q3K3S6</accession>
<dbReference type="EMBL" id="CP000114">
    <property type="protein sequence ID" value="ABA46111.1"/>
    <property type="molecule type" value="Genomic_DNA"/>
</dbReference>
<dbReference type="RefSeq" id="WP_000599671.1">
    <property type="nucleotide sequence ID" value="NC_007432.1"/>
</dbReference>
<dbReference type="SMR" id="Q3K3S6"/>
<dbReference type="KEGG" id="sak:SAK_0153"/>
<dbReference type="HOGENOM" id="CLU_106658_0_0_9"/>
<dbReference type="Gene3D" id="3.40.50.10360">
    <property type="entry name" value="Hypothetical protein TT1679"/>
    <property type="match status" value="1"/>
</dbReference>
<dbReference type="HAMAP" id="MF_00800">
    <property type="entry name" value="UPF0340"/>
    <property type="match status" value="1"/>
</dbReference>
<dbReference type="InterPro" id="IPR028345">
    <property type="entry name" value="Antibiotic_NAT-like"/>
</dbReference>
<dbReference type="InterPro" id="IPR006340">
    <property type="entry name" value="DUF436"/>
</dbReference>
<dbReference type="NCBIfam" id="TIGR01440">
    <property type="entry name" value="TIGR01440 family protein"/>
    <property type="match status" value="1"/>
</dbReference>
<dbReference type="Pfam" id="PF04260">
    <property type="entry name" value="DUF436"/>
    <property type="match status" value="1"/>
</dbReference>
<dbReference type="PIRSF" id="PIRSF007510">
    <property type="entry name" value="UCP007510"/>
    <property type="match status" value="1"/>
</dbReference>
<dbReference type="SUPFAM" id="SSF110710">
    <property type="entry name" value="TTHA0583/YokD-like"/>
    <property type="match status" value="1"/>
</dbReference>
<organism>
    <name type="scientific">Streptococcus agalactiae serotype Ia (strain ATCC 27591 / A909 / CDC SS700)</name>
    <dbReference type="NCBI Taxonomy" id="205921"/>
    <lineage>
        <taxon>Bacteria</taxon>
        <taxon>Bacillati</taxon>
        <taxon>Bacillota</taxon>
        <taxon>Bacilli</taxon>
        <taxon>Lactobacillales</taxon>
        <taxon>Streptococcaceae</taxon>
        <taxon>Streptococcus</taxon>
    </lineage>
</organism>